<name>UXAC_RHIWR</name>
<evidence type="ECO:0000255" key="1">
    <source>
        <dbReference type="HAMAP-Rule" id="MF_00675"/>
    </source>
</evidence>
<protein>
    <recommendedName>
        <fullName evidence="1">Uronate isomerase</fullName>
        <ecNumber evidence="1">5.3.1.12</ecNumber>
    </recommendedName>
    <alternativeName>
        <fullName evidence="1">Glucuronate isomerase</fullName>
    </alternativeName>
    <alternativeName>
        <fullName evidence="1">Uronic isomerase</fullName>
    </alternativeName>
</protein>
<keyword id="KW-0413">Isomerase</keyword>
<keyword id="KW-1185">Reference proteome</keyword>
<reference key="1">
    <citation type="journal article" date="2010" name="J. Bacteriol.">
        <title>Genome sequence of the dioxin-mineralizing bacterium Sphingomonas wittichii RW1.</title>
        <authorList>
            <person name="Miller T.R."/>
            <person name="Delcher A.L."/>
            <person name="Salzberg S.L."/>
            <person name="Saunders E."/>
            <person name="Detter J.C."/>
            <person name="Halden R.U."/>
        </authorList>
    </citation>
    <scope>NUCLEOTIDE SEQUENCE [LARGE SCALE GENOMIC DNA]</scope>
    <source>
        <strain>DSM 6014 / CCUG 31198 / JCM 15750 / NBRC 105917 / EY 4224 / RW1</strain>
    </source>
</reference>
<dbReference type="EC" id="5.3.1.12" evidence="1"/>
<dbReference type="EMBL" id="CP000699">
    <property type="protein sequence ID" value="ABQ68247.1"/>
    <property type="molecule type" value="Genomic_DNA"/>
</dbReference>
<dbReference type="SMR" id="A5V7I1"/>
<dbReference type="STRING" id="392499.Swit_1887"/>
<dbReference type="PaxDb" id="392499-Swit_1887"/>
<dbReference type="KEGG" id="swi:Swit_1887"/>
<dbReference type="eggNOG" id="COG1904">
    <property type="taxonomic scope" value="Bacteria"/>
</dbReference>
<dbReference type="HOGENOM" id="CLU_044465_0_0_5"/>
<dbReference type="OrthoDB" id="9766564at2"/>
<dbReference type="UniPathway" id="UPA00246"/>
<dbReference type="Proteomes" id="UP000001989">
    <property type="component" value="Chromosome"/>
</dbReference>
<dbReference type="GO" id="GO:0008880">
    <property type="term" value="F:glucuronate isomerase activity"/>
    <property type="evidence" value="ECO:0007669"/>
    <property type="project" value="UniProtKB-UniRule"/>
</dbReference>
<dbReference type="GO" id="GO:0019698">
    <property type="term" value="P:D-galacturonate catabolic process"/>
    <property type="evidence" value="ECO:0007669"/>
    <property type="project" value="TreeGrafter"/>
</dbReference>
<dbReference type="GO" id="GO:0042840">
    <property type="term" value="P:D-glucuronate catabolic process"/>
    <property type="evidence" value="ECO:0007669"/>
    <property type="project" value="TreeGrafter"/>
</dbReference>
<dbReference type="Gene3D" id="3.20.20.140">
    <property type="entry name" value="Metal-dependent hydrolases"/>
    <property type="match status" value="1"/>
</dbReference>
<dbReference type="Gene3D" id="1.10.2020.10">
    <property type="entry name" value="uronate isomerase, domain 2, chain A"/>
    <property type="match status" value="1"/>
</dbReference>
<dbReference type="HAMAP" id="MF_00675">
    <property type="entry name" value="UxaC"/>
    <property type="match status" value="1"/>
</dbReference>
<dbReference type="InterPro" id="IPR032466">
    <property type="entry name" value="Metal_Hydrolase"/>
</dbReference>
<dbReference type="InterPro" id="IPR003766">
    <property type="entry name" value="Uronate_isomerase"/>
</dbReference>
<dbReference type="NCBIfam" id="NF002794">
    <property type="entry name" value="PRK02925.1"/>
    <property type="match status" value="1"/>
</dbReference>
<dbReference type="PANTHER" id="PTHR30068">
    <property type="entry name" value="URONATE ISOMERASE"/>
    <property type="match status" value="1"/>
</dbReference>
<dbReference type="PANTHER" id="PTHR30068:SF4">
    <property type="entry name" value="URONATE ISOMERASE"/>
    <property type="match status" value="1"/>
</dbReference>
<dbReference type="Pfam" id="PF02614">
    <property type="entry name" value="UxaC"/>
    <property type="match status" value="1"/>
</dbReference>
<dbReference type="SUPFAM" id="SSF51556">
    <property type="entry name" value="Metallo-dependent hydrolases"/>
    <property type="match status" value="1"/>
</dbReference>
<accession>A5V7I1</accession>
<gene>
    <name evidence="1" type="primary">uxaC</name>
    <name type="ordered locus">Swit_1887</name>
</gene>
<sequence>MTAAPLRLHPDRLFPADPDTRVVARRLYAEVAGLPIVSPHGHTDPRWFAEDAPFGDASSLLLQPDHYVFRMLYSQGVPLEAIGIGAPVDPRAAWRVLADHYHLFRGTPSRLWLDWVFHSVFGLDVRLAPETADLTFDSINEQLARPEFRPRALFDRFNIELLATTESPLDPLDHHAAIRASGWTGRVITAFRPDPVVDPDFEGFAANLDRLGAMTGEDVGSYAGYLAALRARRAAFAAAGATSTDHGHPTAATADLDRGEAERLYAQVRGGGATAEQAELFRAHMLTVMAEMSIDDGLVMQIHPGSFRNHNADLFRRFGRDKGADIPTRTDFVRALRPLLGRFGNDPRLSLILFTLDESAYARELAPLAGHYPALKLGPAWWFHDSPEGMRRFRRQTTETAGFHNLVGFNDDTRAFLSIPARHDVARRIDCGYLAELVVEHQLDEDEAADLAVDLTYRLVKSAYRL</sequence>
<comment type="catalytic activity">
    <reaction evidence="1">
        <text>D-glucuronate = D-fructuronate</text>
        <dbReference type="Rhea" id="RHEA:13049"/>
        <dbReference type="ChEBI" id="CHEBI:58720"/>
        <dbReference type="ChEBI" id="CHEBI:59863"/>
        <dbReference type="EC" id="5.3.1.12"/>
    </reaction>
</comment>
<comment type="catalytic activity">
    <reaction evidence="1">
        <text>aldehydo-D-galacturonate = keto-D-tagaturonate</text>
        <dbReference type="Rhea" id="RHEA:27702"/>
        <dbReference type="ChEBI" id="CHEBI:12952"/>
        <dbReference type="ChEBI" id="CHEBI:17886"/>
        <dbReference type="EC" id="5.3.1.12"/>
    </reaction>
</comment>
<comment type="pathway">
    <text evidence="1">Carbohydrate metabolism; pentose and glucuronate interconversion.</text>
</comment>
<comment type="similarity">
    <text evidence="1">Belongs to the metallo-dependent hydrolases superfamily. Uronate isomerase family.</text>
</comment>
<proteinExistence type="inferred from homology"/>
<feature type="chain" id="PRO_1000044778" description="Uronate isomerase">
    <location>
        <begin position="1"/>
        <end position="466"/>
    </location>
</feature>
<organism>
    <name type="scientific">Rhizorhabdus wittichii (strain DSM 6014 / CCUG 31198 / JCM 15750 / NBRC 105917 / EY 4224 / RW1)</name>
    <name type="common">Sphingomonas wittichii</name>
    <dbReference type="NCBI Taxonomy" id="392499"/>
    <lineage>
        <taxon>Bacteria</taxon>
        <taxon>Pseudomonadati</taxon>
        <taxon>Pseudomonadota</taxon>
        <taxon>Alphaproteobacteria</taxon>
        <taxon>Sphingomonadales</taxon>
        <taxon>Sphingomonadaceae</taxon>
        <taxon>Rhizorhabdus</taxon>
    </lineage>
</organism>